<keyword id="KW-0067">ATP-binding</keyword>
<keyword id="KW-0414">Isoprene biosynthesis</keyword>
<keyword id="KW-0418">Kinase</keyword>
<keyword id="KW-0547">Nucleotide-binding</keyword>
<keyword id="KW-1185">Reference proteome</keyword>
<keyword id="KW-0808">Transferase</keyword>
<organism>
    <name type="scientific">Alkalilimnicola ehrlichii (strain ATCC BAA-1101 / DSM 17681 / MLHE-1)</name>
    <dbReference type="NCBI Taxonomy" id="187272"/>
    <lineage>
        <taxon>Bacteria</taxon>
        <taxon>Pseudomonadati</taxon>
        <taxon>Pseudomonadota</taxon>
        <taxon>Gammaproteobacteria</taxon>
        <taxon>Chromatiales</taxon>
        <taxon>Ectothiorhodospiraceae</taxon>
        <taxon>Alkalilimnicola</taxon>
    </lineage>
</organism>
<name>ISPE_ALKEH</name>
<proteinExistence type="inferred from homology"/>
<protein>
    <recommendedName>
        <fullName evidence="1">4-diphosphocytidyl-2-C-methyl-D-erythritol kinase</fullName>
        <shortName evidence="1">CMK</shortName>
        <ecNumber evidence="1">2.7.1.148</ecNumber>
    </recommendedName>
    <alternativeName>
        <fullName evidence="1">4-(cytidine-5'-diphospho)-2-C-methyl-D-erythritol kinase</fullName>
    </alternativeName>
</protein>
<gene>
    <name evidence="1" type="primary">ispE</name>
    <name type="ordered locus">Mlg_0282</name>
</gene>
<dbReference type="EC" id="2.7.1.148" evidence="1"/>
<dbReference type="EMBL" id="CP000453">
    <property type="protein sequence ID" value="ABI55637.1"/>
    <property type="molecule type" value="Genomic_DNA"/>
</dbReference>
<dbReference type="RefSeq" id="WP_011628033.1">
    <property type="nucleotide sequence ID" value="NC_008340.1"/>
</dbReference>
<dbReference type="SMR" id="Q0AC00"/>
<dbReference type="KEGG" id="aeh:Mlg_0282"/>
<dbReference type="eggNOG" id="COG1947">
    <property type="taxonomic scope" value="Bacteria"/>
</dbReference>
<dbReference type="HOGENOM" id="CLU_053057_3_0_6"/>
<dbReference type="OrthoDB" id="9809438at2"/>
<dbReference type="UniPathway" id="UPA00056">
    <property type="reaction ID" value="UER00094"/>
</dbReference>
<dbReference type="Proteomes" id="UP000001962">
    <property type="component" value="Chromosome"/>
</dbReference>
<dbReference type="GO" id="GO:0050515">
    <property type="term" value="F:4-(cytidine 5'-diphospho)-2-C-methyl-D-erythritol kinase activity"/>
    <property type="evidence" value="ECO:0007669"/>
    <property type="project" value="UniProtKB-UniRule"/>
</dbReference>
<dbReference type="GO" id="GO:0005524">
    <property type="term" value="F:ATP binding"/>
    <property type="evidence" value="ECO:0007669"/>
    <property type="project" value="UniProtKB-UniRule"/>
</dbReference>
<dbReference type="GO" id="GO:0019288">
    <property type="term" value="P:isopentenyl diphosphate biosynthetic process, methylerythritol 4-phosphate pathway"/>
    <property type="evidence" value="ECO:0007669"/>
    <property type="project" value="UniProtKB-UniRule"/>
</dbReference>
<dbReference type="GO" id="GO:0016114">
    <property type="term" value="P:terpenoid biosynthetic process"/>
    <property type="evidence" value="ECO:0007669"/>
    <property type="project" value="InterPro"/>
</dbReference>
<dbReference type="Gene3D" id="3.30.230.10">
    <property type="match status" value="1"/>
</dbReference>
<dbReference type="Gene3D" id="3.30.70.890">
    <property type="entry name" value="GHMP kinase, C-terminal domain"/>
    <property type="match status" value="1"/>
</dbReference>
<dbReference type="HAMAP" id="MF_00061">
    <property type="entry name" value="IspE"/>
    <property type="match status" value="1"/>
</dbReference>
<dbReference type="InterPro" id="IPR013750">
    <property type="entry name" value="GHMP_kinase_C_dom"/>
</dbReference>
<dbReference type="InterPro" id="IPR036554">
    <property type="entry name" value="GHMP_kinase_C_sf"/>
</dbReference>
<dbReference type="InterPro" id="IPR006204">
    <property type="entry name" value="GHMP_kinase_N_dom"/>
</dbReference>
<dbReference type="InterPro" id="IPR004424">
    <property type="entry name" value="IspE"/>
</dbReference>
<dbReference type="InterPro" id="IPR020568">
    <property type="entry name" value="Ribosomal_Su5_D2-typ_SF"/>
</dbReference>
<dbReference type="InterPro" id="IPR014721">
    <property type="entry name" value="Ribsml_uS5_D2-typ_fold_subgr"/>
</dbReference>
<dbReference type="NCBIfam" id="TIGR00154">
    <property type="entry name" value="ispE"/>
    <property type="match status" value="1"/>
</dbReference>
<dbReference type="PANTHER" id="PTHR43527">
    <property type="entry name" value="4-DIPHOSPHOCYTIDYL-2-C-METHYL-D-ERYTHRITOL KINASE, CHLOROPLASTIC"/>
    <property type="match status" value="1"/>
</dbReference>
<dbReference type="PANTHER" id="PTHR43527:SF2">
    <property type="entry name" value="4-DIPHOSPHOCYTIDYL-2-C-METHYL-D-ERYTHRITOL KINASE, CHLOROPLASTIC"/>
    <property type="match status" value="1"/>
</dbReference>
<dbReference type="Pfam" id="PF08544">
    <property type="entry name" value="GHMP_kinases_C"/>
    <property type="match status" value="1"/>
</dbReference>
<dbReference type="Pfam" id="PF00288">
    <property type="entry name" value="GHMP_kinases_N"/>
    <property type="match status" value="1"/>
</dbReference>
<dbReference type="PIRSF" id="PIRSF010376">
    <property type="entry name" value="IspE"/>
    <property type="match status" value="1"/>
</dbReference>
<dbReference type="SUPFAM" id="SSF55060">
    <property type="entry name" value="GHMP Kinase, C-terminal domain"/>
    <property type="match status" value="1"/>
</dbReference>
<dbReference type="SUPFAM" id="SSF54211">
    <property type="entry name" value="Ribosomal protein S5 domain 2-like"/>
    <property type="match status" value="1"/>
</dbReference>
<feature type="chain" id="PRO_1000007807" description="4-diphosphocytidyl-2-C-methyl-D-erythritol kinase">
    <location>
        <begin position="1"/>
        <end position="291"/>
    </location>
</feature>
<feature type="active site" evidence="1">
    <location>
        <position position="12"/>
    </location>
</feature>
<feature type="active site" evidence="1">
    <location>
        <position position="137"/>
    </location>
</feature>
<feature type="binding site" evidence="1">
    <location>
        <begin position="95"/>
        <end position="105"/>
    </location>
    <ligand>
        <name>ATP</name>
        <dbReference type="ChEBI" id="CHEBI:30616"/>
    </ligand>
</feature>
<accession>Q0AC00</accession>
<sequence length="291" mass="31551">MSWSRHWPAPAKINLFLHILGRRPDGYHRLQTAFQILDRGDELAFRVRPDGELRRRGGLDHVPPDQDLTVRAARLLQQTTGCRLGADIVLDKRLPDGGGLGGGSSNAATVLQALNRLWGTGLSTLELAGLGLRLGADVPVFVHGRTAWAEGVGERLTPIETPSRWFLVVHPGCRVSTAEVFAAEGLTRDSAPSTISALRAGRVRNDCEPWVRAHYRAVDEALGWLSRFAPARMTGTGACVFAPFEREAQARAALDRLPAAWQGFVAQGVACSSLLGRLRGEQDSADRDGPT</sequence>
<comment type="function">
    <text evidence="1">Catalyzes the phosphorylation of the position 2 hydroxy group of 4-diphosphocytidyl-2C-methyl-D-erythritol.</text>
</comment>
<comment type="catalytic activity">
    <reaction evidence="1">
        <text>4-CDP-2-C-methyl-D-erythritol + ATP = 4-CDP-2-C-methyl-D-erythritol 2-phosphate + ADP + H(+)</text>
        <dbReference type="Rhea" id="RHEA:18437"/>
        <dbReference type="ChEBI" id="CHEBI:15378"/>
        <dbReference type="ChEBI" id="CHEBI:30616"/>
        <dbReference type="ChEBI" id="CHEBI:57823"/>
        <dbReference type="ChEBI" id="CHEBI:57919"/>
        <dbReference type="ChEBI" id="CHEBI:456216"/>
        <dbReference type="EC" id="2.7.1.148"/>
    </reaction>
</comment>
<comment type="pathway">
    <text evidence="1">Isoprenoid biosynthesis; isopentenyl diphosphate biosynthesis via DXP pathway; isopentenyl diphosphate from 1-deoxy-D-xylulose 5-phosphate: step 3/6.</text>
</comment>
<comment type="similarity">
    <text evidence="1">Belongs to the GHMP kinase family. IspE subfamily.</text>
</comment>
<reference key="1">
    <citation type="submission" date="2006-08" db="EMBL/GenBank/DDBJ databases">
        <title>Complete sequence of Alkalilimnicola ehrilichei MLHE-1.</title>
        <authorList>
            <person name="Copeland A."/>
            <person name="Lucas S."/>
            <person name="Lapidus A."/>
            <person name="Barry K."/>
            <person name="Detter J.C."/>
            <person name="Glavina del Rio T."/>
            <person name="Hammon N."/>
            <person name="Israni S."/>
            <person name="Dalin E."/>
            <person name="Tice H."/>
            <person name="Pitluck S."/>
            <person name="Sims D."/>
            <person name="Brettin T."/>
            <person name="Bruce D."/>
            <person name="Han C."/>
            <person name="Tapia R."/>
            <person name="Gilna P."/>
            <person name="Schmutz J."/>
            <person name="Larimer F."/>
            <person name="Land M."/>
            <person name="Hauser L."/>
            <person name="Kyrpides N."/>
            <person name="Mikhailova N."/>
            <person name="Oremland R.S."/>
            <person name="Hoeft S.E."/>
            <person name="Switzer-Blum J."/>
            <person name="Kulp T."/>
            <person name="King G."/>
            <person name="Tabita R."/>
            <person name="Witte B."/>
            <person name="Santini J.M."/>
            <person name="Basu P."/>
            <person name="Hollibaugh J.T."/>
            <person name="Xie G."/>
            <person name="Stolz J.F."/>
            <person name="Richardson P."/>
        </authorList>
    </citation>
    <scope>NUCLEOTIDE SEQUENCE [LARGE SCALE GENOMIC DNA]</scope>
    <source>
        <strain>ATCC BAA-1101 / DSM 17681 / MLHE-1</strain>
    </source>
</reference>
<evidence type="ECO:0000255" key="1">
    <source>
        <dbReference type="HAMAP-Rule" id="MF_00061"/>
    </source>
</evidence>